<sequence length="341" mass="37253">MQQLTIAIDAMGGDFGPQVTVPAAVQALSQFPELKITVIGDRDAISTQLTHLNYIPNSRFSIVHSESVIGNNTQPSKALRHSRGSSMRMAIDMVANKEADACISAGNTGALMGLSRFTLKLLPGVERPALISPLPTKNNQRTWMLDLGANVSCDAETLFQFAVMGSELAEQTLKRKAKVALLNIGEEEIKGNDQIKRCAEMLNQCQDIEFIGYIEGDKLYQGIADVVVCDGFVGNVCLKTSEGVAHLFLDQLKSHLITSKFKQFIAKWLFGDVISCLKGLNPDQYNGASLIGLRGIVVKSHGSADVSAFNNAIKEAVHEVKRQIPNRISDRLEAVLLERHY</sequence>
<organism>
    <name type="scientific">Aliivibrio fischeri (strain MJ11)</name>
    <name type="common">Vibrio fischeri</name>
    <dbReference type="NCBI Taxonomy" id="388396"/>
    <lineage>
        <taxon>Bacteria</taxon>
        <taxon>Pseudomonadati</taxon>
        <taxon>Pseudomonadota</taxon>
        <taxon>Gammaproteobacteria</taxon>
        <taxon>Vibrionales</taxon>
        <taxon>Vibrionaceae</taxon>
        <taxon>Aliivibrio</taxon>
    </lineage>
</organism>
<keyword id="KW-0963">Cytoplasm</keyword>
<keyword id="KW-0444">Lipid biosynthesis</keyword>
<keyword id="KW-0443">Lipid metabolism</keyword>
<keyword id="KW-0594">Phospholipid biosynthesis</keyword>
<keyword id="KW-1208">Phospholipid metabolism</keyword>
<keyword id="KW-0808">Transferase</keyword>
<protein>
    <recommendedName>
        <fullName evidence="1">Phosphate acyltransferase</fullName>
        <ecNumber evidence="1">2.3.1.274</ecNumber>
    </recommendedName>
    <alternativeName>
        <fullName evidence="1">Acyl-ACP phosphotransacylase</fullName>
    </alternativeName>
    <alternativeName>
        <fullName evidence="1">Acyl-[acyl-carrier-protein]--phosphate acyltransferase</fullName>
    </alternativeName>
    <alternativeName>
        <fullName evidence="1">Phosphate-acyl-ACP acyltransferase</fullName>
    </alternativeName>
</protein>
<accession>B5FG42</accession>
<feature type="chain" id="PRO_1000089949" description="Phosphate acyltransferase">
    <location>
        <begin position="1"/>
        <end position="341"/>
    </location>
</feature>
<proteinExistence type="inferred from homology"/>
<dbReference type="EC" id="2.3.1.274" evidence="1"/>
<dbReference type="EMBL" id="CP001139">
    <property type="protein sequence ID" value="ACH66006.1"/>
    <property type="molecule type" value="Genomic_DNA"/>
</dbReference>
<dbReference type="RefSeq" id="WP_005420134.1">
    <property type="nucleotide sequence ID" value="NC_011184.1"/>
</dbReference>
<dbReference type="SMR" id="B5FG42"/>
<dbReference type="GeneID" id="54164442"/>
<dbReference type="KEGG" id="vfm:VFMJ11_1870"/>
<dbReference type="HOGENOM" id="CLU_039379_1_0_6"/>
<dbReference type="UniPathway" id="UPA00085"/>
<dbReference type="Proteomes" id="UP000001857">
    <property type="component" value="Chromosome I"/>
</dbReference>
<dbReference type="GO" id="GO:0005737">
    <property type="term" value="C:cytoplasm"/>
    <property type="evidence" value="ECO:0007669"/>
    <property type="project" value="UniProtKB-SubCell"/>
</dbReference>
<dbReference type="GO" id="GO:0043811">
    <property type="term" value="F:phosphate:acyl-[acyl carrier protein] acyltransferase activity"/>
    <property type="evidence" value="ECO:0007669"/>
    <property type="project" value="UniProtKB-UniRule"/>
</dbReference>
<dbReference type="GO" id="GO:0006633">
    <property type="term" value="P:fatty acid biosynthetic process"/>
    <property type="evidence" value="ECO:0007669"/>
    <property type="project" value="UniProtKB-UniRule"/>
</dbReference>
<dbReference type="GO" id="GO:0008654">
    <property type="term" value="P:phospholipid biosynthetic process"/>
    <property type="evidence" value="ECO:0007669"/>
    <property type="project" value="UniProtKB-KW"/>
</dbReference>
<dbReference type="Gene3D" id="3.40.718.10">
    <property type="entry name" value="Isopropylmalate Dehydrogenase"/>
    <property type="match status" value="1"/>
</dbReference>
<dbReference type="HAMAP" id="MF_00019">
    <property type="entry name" value="PlsX"/>
    <property type="match status" value="1"/>
</dbReference>
<dbReference type="InterPro" id="IPR003664">
    <property type="entry name" value="FA_synthesis"/>
</dbReference>
<dbReference type="InterPro" id="IPR012281">
    <property type="entry name" value="Phospholipid_synth_PlsX-like"/>
</dbReference>
<dbReference type="NCBIfam" id="TIGR00182">
    <property type="entry name" value="plsX"/>
    <property type="match status" value="1"/>
</dbReference>
<dbReference type="PANTHER" id="PTHR30100">
    <property type="entry name" value="FATTY ACID/PHOSPHOLIPID SYNTHESIS PROTEIN PLSX"/>
    <property type="match status" value="1"/>
</dbReference>
<dbReference type="PANTHER" id="PTHR30100:SF1">
    <property type="entry name" value="PHOSPHATE ACYLTRANSFERASE"/>
    <property type="match status" value="1"/>
</dbReference>
<dbReference type="Pfam" id="PF02504">
    <property type="entry name" value="FA_synthesis"/>
    <property type="match status" value="1"/>
</dbReference>
<dbReference type="PIRSF" id="PIRSF002465">
    <property type="entry name" value="Phsphlp_syn_PlsX"/>
    <property type="match status" value="1"/>
</dbReference>
<dbReference type="SUPFAM" id="SSF53659">
    <property type="entry name" value="Isocitrate/Isopropylmalate dehydrogenase-like"/>
    <property type="match status" value="1"/>
</dbReference>
<comment type="function">
    <text evidence="1">Catalyzes the reversible formation of acyl-phosphate (acyl-PO(4)) from acyl-[acyl-carrier-protein] (acyl-ACP). This enzyme utilizes acyl-ACP as fatty acyl donor, but not acyl-CoA.</text>
</comment>
<comment type="catalytic activity">
    <reaction evidence="1">
        <text>a fatty acyl-[ACP] + phosphate = an acyl phosphate + holo-[ACP]</text>
        <dbReference type="Rhea" id="RHEA:42292"/>
        <dbReference type="Rhea" id="RHEA-COMP:9685"/>
        <dbReference type="Rhea" id="RHEA-COMP:14125"/>
        <dbReference type="ChEBI" id="CHEBI:43474"/>
        <dbReference type="ChEBI" id="CHEBI:59918"/>
        <dbReference type="ChEBI" id="CHEBI:64479"/>
        <dbReference type="ChEBI" id="CHEBI:138651"/>
        <dbReference type="EC" id="2.3.1.274"/>
    </reaction>
</comment>
<comment type="pathway">
    <text evidence="1">Lipid metabolism; phospholipid metabolism.</text>
</comment>
<comment type="subunit">
    <text evidence="1">Homodimer. Probably interacts with PlsY.</text>
</comment>
<comment type="subcellular location">
    <subcellularLocation>
        <location evidence="1">Cytoplasm</location>
    </subcellularLocation>
    <text evidence="1">Associated with the membrane possibly through PlsY.</text>
</comment>
<comment type="similarity">
    <text evidence="1">Belongs to the PlsX family.</text>
</comment>
<reference key="1">
    <citation type="submission" date="2008-08" db="EMBL/GenBank/DDBJ databases">
        <title>Complete sequence of Vibrio fischeri strain MJ11.</title>
        <authorList>
            <person name="Mandel M.J."/>
            <person name="Stabb E.V."/>
            <person name="Ruby E.G."/>
            <person name="Ferriera S."/>
            <person name="Johnson J."/>
            <person name="Kravitz S."/>
            <person name="Beeson K."/>
            <person name="Sutton G."/>
            <person name="Rogers Y.-H."/>
            <person name="Friedman R."/>
            <person name="Frazier M."/>
            <person name="Venter J.C."/>
        </authorList>
    </citation>
    <scope>NUCLEOTIDE SEQUENCE [LARGE SCALE GENOMIC DNA]</scope>
    <source>
        <strain>MJ11</strain>
    </source>
</reference>
<gene>
    <name evidence="1" type="primary">plsX</name>
    <name type="ordered locus">VFMJ11_1870</name>
</gene>
<name>PLSX_ALIFM</name>
<evidence type="ECO:0000255" key="1">
    <source>
        <dbReference type="HAMAP-Rule" id="MF_00019"/>
    </source>
</evidence>